<organism>
    <name type="scientific">Mycobacterium tuberculosis (strain ATCC 25618 / H37Rv)</name>
    <dbReference type="NCBI Taxonomy" id="83332"/>
    <lineage>
        <taxon>Bacteria</taxon>
        <taxon>Bacillati</taxon>
        <taxon>Actinomycetota</taxon>
        <taxon>Actinomycetes</taxon>
        <taxon>Mycobacteriales</taxon>
        <taxon>Mycobacteriaceae</taxon>
        <taxon>Mycobacterium</taxon>
        <taxon>Mycobacterium tuberculosis complex</taxon>
    </lineage>
</organism>
<proteinExistence type="evidence at protein level"/>
<gene>
    <name type="primary">rpmJ</name>
    <name type="ordered locus">Rv3461c</name>
    <name type="ORF">MTCY13E12.14c</name>
</gene>
<comment type="similarity">
    <text evidence="1">Belongs to the bacterial ribosomal protein bL36 family.</text>
</comment>
<accession>P9WH89</accession>
<accession>L0TCL3</accession>
<accession>O08382</accession>
<accession>P0A5W6</accession>
<accession>P45810</accession>
<protein>
    <recommendedName>
        <fullName evidence="1">Large ribosomal subunit protein bL36</fullName>
    </recommendedName>
    <alternativeName>
        <fullName>50S ribosomal protein L36</fullName>
    </alternativeName>
    <alternativeName>
        <fullName>Ribosomal protein B</fullName>
    </alternativeName>
</protein>
<dbReference type="EMBL" id="AL123456">
    <property type="protein sequence ID" value="CCP46283.1"/>
    <property type="molecule type" value="Genomic_DNA"/>
</dbReference>
<dbReference type="PIR" id="B70566">
    <property type="entry name" value="B70566"/>
</dbReference>
<dbReference type="RefSeq" id="NP_217978.1">
    <property type="nucleotide sequence ID" value="NC_000962.3"/>
</dbReference>
<dbReference type="RefSeq" id="WP_003418367.1">
    <property type="nucleotide sequence ID" value="NZ_NVQJ01000091.1"/>
</dbReference>
<dbReference type="PDB" id="5V7Q">
    <property type="method" value="EM"/>
    <property type="resolution" value="3.70 A"/>
    <property type="chains" value="4=1-37"/>
</dbReference>
<dbReference type="PDB" id="5V93">
    <property type="method" value="EM"/>
    <property type="resolution" value="4.00 A"/>
    <property type="chains" value="4=1-37"/>
</dbReference>
<dbReference type="PDB" id="7KGB">
    <property type="method" value="EM"/>
    <property type="resolution" value="2.70 A"/>
    <property type="chains" value="4=1-37"/>
</dbReference>
<dbReference type="PDB" id="7MSC">
    <property type="method" value="EM"/>
    <property type="resolution" value="2.97 A"/>
    <property type="chains" value="4=1-37"/>
</dbReference>
<dbReference type="PDB" id="7MSH">
    <property type="method" value="EM"/>
    <property type="resolution" value="3.23 A"/>
    <property type="chains" value="4=1-37"/>
</dbReference>
<dbReference type="PDB" id="7MSM">
    <property type="method" value="EM"/>
    <property type="resolution" value="2.79 A"/>
    <property type="chains" value="4=1-37"/>
</dbReference>
<dbReference type="PDB" id="7MSZ">
    <property type="method" value="EM"/>
    <property type="resolution" value="3.10 A"/>
    <property type="chains" value="4=1-37"/>
</dbReference>
<dbReference type="PDB" id="7MT2">
    <property type="method" value="EM"/>
    <property type="resolution" value="2.76 A"/>
    <property type="chains" value="4=1-37"/>
</dbReference>
<dbReference type="PDB" id="7MT3">
    <property type="method" value="EM"/>
    <property type="resolution" value="2.80 A"/>
    <property type="chains" value="4=1-37"/>
</dbReference>
<dbReference type="PDB" id="7MT7">
    <property type="method" value="EM"/>
    <property type="resolution" value="2.71 A"/>
    <property type="chains" value="4=1-37"/>
</dbReference>
<dbReference type="PDB" id="7SFR">
    <property type="method" value="EM"/>
    <property type="resolution" value="2.60 A"/>
    <property type="chains" value="4=1-37"/>
</dbReference>
<dbReference type="PDBsum" id="5V7Q"/>
<dbReference type="PDBsum" id="5V93"/>
<dbReference type="PDBsum" id="7KGB"/>
<dbReference type="PDBsum" id="7MSC"/>
<dbReference type="PDBsum" id="7MSH"/>
<dbReference type="PDBsum" id="7MSM"/>
<dbReference type="PDBsum" id="7MSZ"/>
<dbReference type="PDBsum" id="7MT2"/>
<dbReference type="PDBsum" id="7MT3"/>
<dbReference type="PDBsum" id="7MT7"/>
<dbReference type="PDBsum" id="7SFR"/>
<dbReference type="EMDB" id="EMD-22865"/>
<dbReference type="EMDB" id="EMD-23961"/>
<dbReference type="EMDB" id="EMD-23962"/>
<dbReference type="EMDB" id="EMD-23969"/>
<dbReference type="EMDB" id="EMD-23972"/>
<dbReference type="EMDB" id="EMD-23974"/>
<dbReference type="EMDB" id="EMD-23975"/>
<dbReference type="EMDB" id="EMD-23976"/>
<dbReference type="EMDB" id="EMD-8645"/>
<dbReference type="SMR" id="P9WH89"/>
<dbReference type="FunCoup" id="P9WH89">
    <property type="interactions" value="76"/>
</dbReference>
<dbReference type="STRING" id="83332.Rv3461c"/>
<dbReference type="PaxDb" id="83332-Rv3461c"/>
<dbReference type="DNASU" id="887272"/>
<dbReference type="GeneID" id="45427450"/>
<dbReference type="GeneID" id="887272"/>
<dbReference type="KEGG" id="mtu:Rv3461c"/>
<dbReference type="KEGG" id="mtv:RVBD_3461c"/>
<dbReference type="TubercuList" id="Rv3461c"/>
<dbReference type="eggNOG" id="COG0257">
    <property type="taxonomic scope" value="Bacteria"/>
</dbReference>
<dbReference type="InParanoid" id="P9WH89"/>
<dbReference type="OrthoDB" id="9802520at2"/>
<dbReference type="PhylomeDB" id="P9WH89"/>
<dbReference type="PRO" id="PR:P9WH89"/>
<dbReference type="Proteomes" id="UP000001584">
    <property type="component" value="Chromosome"/>
</dbReference>
<dbReference type="GO" id="GO:0005737">
    <property type="term" value="C:cytoplasm"/>
    <property type="evidence" value="ECO:0007669"/>
    <property type="project" value="UniProtKB-ARBA"/>
</dbReference>
<dbReference type="GO" id="GO:1990904">
    <property type="term" value="C:ribonucleoprotein complex"/>
    <property type="evidence" value="ECO:0007669"/>
    <property type="project" value="UniProtKB-KW"/>
</dbReference>
<dbReference type="GO" id="GO:0005840">
    <property type="term" value="C:ribosome"/>
    <property type="evidence" value="ECO:0007669"/>
    <property type="project" value="UniProtKB-KW"/>
</dbReference>
<dbReference type="GO" id="GO:0003735">
    <property type="term" value="F:structural constituent of ribosome"/>
    <property type="evidence" value="ECO:0007669"/>
    <property type="project" value="InterPro"/>
</dbReference>
<dbReference type="GO" id="GO:0006412">
    <property type="term" value="P:translation"/>
    <property type="evidence" value="ECO:0007669"/>
    <property type="project" value="UniProtKB-UniRule"/>
</dbReference>
<dbReference type="HAMAP" id="MF_00251">
    <property type="entry name" value="Ribosomal_bL36"/>
    <property type="match status" value="1"/>
</dbReference>
<dbReference type="InterPro" id="IPR000473">
    <property type="entry name" value="Ribosomal_bL36"/>
</dbReference>
<dbReference type="InterPro" id="IPR035977">
    <property type="entry name" value="Ribosomal_bL36_sp"/>
</dbReference>
<dbReference type="NCBIfam" id="TIGR01022">
    <property type="entry name" value="rpmJ_bact"/>
    <property type="match status" value="1"/>
</dbReference>
<dbReference type="PANTHER" id="PTHR42888">
    <property type="entry name" value="50S RIBOSOMAL PROTEIN L36, CHLOROPLASTIC"/>
    <property type="match status" value="1"/>
</dbReference>
<dbReference type="PANTHER" id="PTHR42888:SF1">
    <property type="entry name" value="LARGE RIBOSOMAL SUBUNIT PROTEIN BL36C"/>
    <property type="match status" value="1"/>
</dbReference>
<dbReference type="Pfam" id="PF00444">
    <property type="entry name" value="Ribosomal_L36"/>
    <property type="match status" value="1"/>
</dbReference>
<dbReference type="SUPFAM" id="SSF57840">
    <property type="entry name" value="Ribosomal protein L36"/>
    <property type="match status" value="1"/>
</dbReference>
<dbReference type="PROSITE" id="PS00828">
    <property type="entry name" value="RIBOSOMAL_L36"/>
    <property type="match status" value="1"/>
</dbReference>
<reference key="1">
    <citation type="journal article" date="1998" name="Nature">
        <title>Deciphering the biology of Mycobacterium tuberculosis from the complete genome sequence.</title>
        <authorList>
            <person name="Cole S.T."/>
            <person name="Brosch R."/>
            <person name="Parkhill J."/>
            <person name="Garnier T."/>
            <person name="Churcher C.M."/>
            <person name="Harris D.E."/>
            <person name="Gordon S.V."/>
            <person name="Eiglmeier K."/>
            <person name="Gas S."/>
            <person name="Barry C.E. III"/>
            <person name="Tekaia F."/>
            <person name="Badcock K."/>
            <person name="Basham D."/>
            <person name="Brown D."/>
            <person name="Chillingworth T."/>
            <person name="Connor R."/>
            <person name="Davies R.M."/>
            <person name="Devlin K."/>
            <person name="Feltwell T."/>
            <person name="Gentles S."/>
            <person name="Hamlin N."/>
            <person name="Holroyd S."/>
            <person name="Hornsby T."/>
            <person name="Jagels K."/>
            <person name="Krogh A."/>
            <person name="McLean J."/>
            <person name="Moule S."/>
            <person name="Murphy L.D."/>
            <person name="Oliver S."/>
            <person name="Osborne J."/>
            <person name="Quail M.A."/>
            <person name="Rajandream M.A."/>
            <person name="Rogers J."/>
            <person name="Rutter S."/>
            <person name="Seeger K."/>
            <person name="Skelton S."/>
            <person name="Squares S."/>
            <person name="Squares R."/>
            <person name="Sulston J.E."/>
            <person name="Taylor K."/>
            <person name="Whitehead S."/>
            <person name="Barrell B.G."/>
        </authorList>
    </citation>
    <scope>NUCLEOTIDE SEQUENCE [LARGE SCALE GENOMIC DNA]</scope>
    <source>
        <strain>ATCC 25618 / H37Rv</strain>
    </source>
</reference>
<reference key="2">
    <citation type="journal article" date="2011" name="Mol. Cell. Proteomics">
        <title>Proteogenomic analysis of Mycobacterium tuberculosis by high resolution mass spectrometry.</title>
        <authorList>
            <person name="Kelkar D.S."/>
            <person name="Kumar D."/>
            <person name="Kumar P."/>
            <person name="Balakrishnan L."/>
            <person name="Muthusamy B."/>
            <person name="Yadav A.K."/>
            <person name="Shrivastava P."/>
            <person name="Marimuthu A."/>
            <person name="Anand S."/>
            <person name="Sundaram H."/>
            <person name="Kingsbury R."/>
            <person name="Harsha H.C."/>
            <person name="Nair B."/>
            <person name="Prasad T.S."/>
            <person name="Chauhan D.S."/>
            <person name="Katoch K."/>
            <person name="Katoch V.M."/>
            <person name="Kumar P."/>
            <person name="Chaerkady R."/>
            <person name="Ramachandran S."/>
            <person name="Dash D."/>
            <person name="Pandey A."/>
        </authorList>
    </citation>
    <scope>IDENTIFICATION BY MASS SPECTROMETRY [LARGE SCALE ANALYSIS]</scope>
    <source>
        <strain>ATCC 25618 / H37Rv</strain>
    </source>
</reference>
<keyword id="KW-0002">3D-structure</keyword>
<keyword id="KW-1185">Reference proteome</keyword>
<keyword id="KW-0687">Ribonucleoprotein</keyword>
<keyword id="KW-0689">Ribosomal protein</keyword>
<evidence type="ECO:0000305" key="1"/>
<sequence length="37" mass="4343">MKVNPSVKPICDKCRLIRRHGRVMVICSDPRHKQRQG</sequence>
<name>RL36_MYCTU</name>
<feature type="chain" id="PRO_0000126221" description="Large ribosomal subunit protein bL36">
    <location>
        <begin position="1"/>
        <end position="37"/>
    </location>
</feature>